<protein>
    <recommendedName>
        <fullName evidence="1">DNA-directed RNA polymerase subunit beta'</fullName>
        <shortName evidence="1">RNAP subunit beta'</shortName>
        <ecNumber evidence="1">2.7.7.6</ecNumber>
    </recommendedName>
    <alternativeName>
        <fullName evidence="1">RNA polymerase subunit beta'</fullName>
    </alternativeName>
    <alternativeName>
        <fullName evidence="1">Transcriptase subunit beta'</fullName>
    </alternativeName>
</protein>
<sequence>MKDLLKFLKAQTKTEEFDAIKIALASPDMIRSWSFGEVKKPETINYRTFKPERDGLFCARIFGPVKDYECLCGKYKRLKHRGVICEKCGVEVTQTKVRRERMGHIELASPTAHIWFLKSLPSRIGLLLDMPLRDIERVLYFESYVVIEGGMTNLERRQILTEEQYLDALEEFGDEFDAKMGAEAIQALLKNMDLEAECEILREELNETNSETKRKKLTKRIKLLEAFVQSGNKPEWMILTVLPVLPPDLRPLVPLDGGRFATSDLNDLYRRVINRNNRLKRLLDLAAPDIIVRNEKRMLQEAVDALLDNGRRGRAITGSNKRPLKSLADMIKGKQGRFRQNLLGKRVDYSGRSVITVGPYLRLHQCGLPKKMALELFKPFIYGKLELRGLATTIKAAKKMVEREEAVVWDILDEVIREHPVLLNRAPTLHRLGIQAFEPVLIEGKAIQLHPLVCAAYNADFDGDQMAVHVPLTLEAQLEARALMMSTNNILSPANGEPIIVPSQDVVLGLYYMTRDCVNAKGEGMVLTGPKEAERIYRAGLASLHARVKVRITEEIRNTEGESITRTSIIDTTVGRAILWMIVPQGLPYSIVNQPLGKKAISKMLNTCYRILGLKPTVIFADQIMYTGFAYAARSGASVGIDDMVIPEAKAGIIEEAETEVAEIQEQFQSGLVTAGERYNKVIDIWAAANERVAKAMMDNLSVEDVVNRDGVVEQQVSFNSIFMMADSGARGSAAQIRQLAGMRGLMAKPDGSIIETPITANFREGLNVLQYFISTHGARKGLADTALKTANSGYLTRRLVDVAQDLVVTEDDCGTHNGIVMTPVIEGGDVKEPLRDRVLGRVTAEEVIKPGSADILVPRNTLLDEKWCDLLEENSVDSVKVRSVVSCETDFGVCANCYGRDLARGHIINKGEAVGVIAAQSIGEPGTQLTMRTFHIGGAASRAAAESSIQVKNKGSLKLSNVKFVTNAAGKLVITSRNTELKLIDEFGRTKESYKVPYGAVMAKGDGAEVQGGETVANWDPHIMPVVTEVSGFIRFADMVDGQTITRQTDELTGLSSLVVLDSAERTGSGKDLRPALKIVDAKGNDVLIPGTDMPAQYFLPGKAIVQLEDGIQIGAGDTLARIPQESSGTKDITGGLPRVADLFEARRPKEPAILAEISGIISFGKETKGKRRLVISPLDGSDAYEEMIPKWRQLNVFEGEVVERGDVVSDGPESPHDILRLRGVHAVTRYITNEVQEVYRLQGVKINDKHIEVIVRQMLRKGTIVDAGSTDFLEGEQAEMSRVKIANRKLAAEGKIEATFTRDLLGITKASLATESFISAASFQETTRVLTEAAVAGKRDELRGLKENVIVGRLIPAGTGYAYHQDRMRRKAQGEAPVVPQVSADEATANLAELLNAGFGNNKG</sequence>
<evidence type="ECO:0000255" key="1">
    <source>
        <dbReference type="HAMAP-Rule" id="MF_01322"/>
    </source>
</evidence>
<evidence type="ECO:0000305" key="2"/>
<name>RPOC_YERPA</name>
<organism>
    <name type="scientific">Yersinia pestis bv. Antiqua (strain Antiqua)</name>
    <dbReference type="NCBI Taxonomy" id="360102"/>
    <lineage>
        <taxon>Bacteria</taxon>
        <taxon>Pseudomonadati</taxon>
        <taxon>Pseudomonadota</taxon>
        <taxon>Gammaproteobacteria</taxon>
        <taxon>Enterobacterales</taxon>
        <taxon>Yersiniaceae</taxon>
        <taxon>Yersinia</taxon>
    </lineage>
</organism>
<comment type="function">
    <text evidence="1">DNA-dependent RNA polymerase catalyzes the transcription of DNA into RNA using the four ribonucleoside triphosphates as substrates.</text>
</comment>
<comment type="catalytic activity">
    <reaction evidence="1">
        <text>RNA(n) + a ribonucleoside 5'-triphosphate = RNA(n+1) + diphosphate</text>
        <dbReference type="Rhea" id="RHEA:21248"/>
        <dbReference type="Rhea" id="RHEA-COMP:14527"/>
        <dbReference type="Rhea" id="RHEA-COMP:17342"/>
        <dbReference type="ChEBI" id="CHEBI:33019"/>
        <dbReference type="ChEBI" id="CHEBI:61557"/>
        <dbReference type="ChEBI" id="CHEBI:140395"/>
        <dbReference type="EC" id="2.7.7.6"/>
    </reaction>
</comment>
<comment type="cofactor">
    <cofactor evidence="1">
        <name>Mg(2+)</name>
        <dbReference type="ChEBI" id="CHEBI:18420"/>
    </cofactor>
    <text evidence="1">Binds 1 Mg(2+) ion per subunit.</text>
</comment>
<comment type="cofactor">
    <cofactor evidence="1">
        <name>Zn(2+)</name>
        <dbReference type="ChEBI" id="CHEBI:29105"/>
    </cofactor>
    <text evidence="1">Binds 2 Zn(2+) ions per subunit.</text>
</comment>
<comment type="subunit">
    <text evidence="1">The RNAP catalytic core consists of 2 alpha, 1 beta, 1 beta' and 1 omega subunit. When a sigma factor is associated with the core the holoenzyme is formed, which can initiate transcription.</text>
</comment>
<comment type="similarity">
    <text evidence="1">Belongs to the RNA polymerase beta' chain family.</text>
</comment>
<comment type="sequence caution" evidence="2">
    <conflict type="erroneous initiation">
        <sequence resource="EMBL-CDS" id="ABG15580"/>
    </conflict>
    <text>Extended N-terminus.</text>
</comment>
<feature type="chain" id="PRO_0000353463" description="DNA-directed RNA polymerase subunit beta'">
    <location>
        <begin position="1"/>
        <end position="1406"/>
    </location>
</feature>
<feature type="binding site" evidence="1">
    <location>
        <position position="70"/>
    </location>
    <ligand>
        <name>Zn(2+)</name>
        <dbReference type="ChEBI" id="CHEBI:29105"/>
        <label>1</label>
    </ligand>
</feature>
<feature type="binding site" evidence="1">
    <location>
        <position position="72"/>
    </location>
    <ligand>
        <name>Zn(2+)</name>
        <dbReference type="ChEBI" id="CHEBI:29105"/>
        <label>1</label>
    </ligand>
</feature>
<feature type="binding site" evidence="1">
    <location>
        <position position="85"/>
    </location>
    <ligand>
        <name>Zn(2+)</name>
        <dbReference type="ChEBI" id="CHEBI:29105"/>
        <label>1</label>
    </ligand>
</feature>
<feature type="binding site" evidence="1">
    <location>
        <position position="88"/>
    </location>
    <ligand>
        <name>Zn(2+)</name>
        <dbReference type="ChEBI" id="CHEBI:29105"/>
        <label>1</label>
    </ligand>
</feature>
<feature type="binding site" evidence="1">
    <location>
        <position position="460"/>
    </location>
    <ligand>
        <name>Mg(2+)</name>
        <dbReference type="ChEBI" id="CHEBI:18420"/>
    </ligand>
</feature>
<feature type="binding site" evidence="1">
    <location>
        <position position="462"/>
    </location>
    <ligand>
        <name>Mg(2+)</name>
        <dbReference type="ChEBI" id="CHEBI:18420"/>
    </ligand>
</feature>
<feature type="binding site" evidence="1">
    <location>
        <position position="464"/>
    </location>
    <ligand>
        <name>Mg(2+)</name>
        <dbReference type="ChEBI" id="CHEBI:18420"/>
    </ligand>
</feature>
<feature type="binding site" evidence="1">
    <location>
        <position position="814"/>
    </location>
    <ligand>
        <name>Zn(2+)</name>
        <dbReference type="ChEBI" id="CHEBI:29105"/>
        <label>2</label>
    </ligand>
</feature>
<feature type="binding site" evidence="1">
    <location>
        <position position="888"/>
    </location>
    <ligand>
        <name>Zn(2+)</name>
        <dbReference type="ChEBI" id="CHEBI:29105"/>
        <label>2</label>
    </ligand>
</feature>
<feature type="binding site" evidence="1">
    <location>
        <position position="895"/>
    </location>
    <ligand>
        <name>Zn(2+)</name>
        <dbReference type="ChEBI" id="CHEBI:29105"/>
        <label>2</label>
    </ligand>
</feature>
<feature type="binding site" evidence="1">
    <location>
        <position position="898"/>
    </location>
    <ligand>
        <name>Zn(2+)</name>
        <dbReference type="ChEBI" id="CHEBI:29105"/>
        <label>2</label>
    </ligand>
</feature>
<proteinExistence type="inferred from homology"/>
<keyword id="KW-0240">DNA-directed RNA polymerase</keyword>
<keyword id="KW-0460">Magnesium</keyword>
<keyword id="KW-0479">Metal-binding</keyword>
<keyword id="KW-0548">Nucleotidyltransferase</keyword>
<keyword id="KW-0804">Transcription</keyword>
<keyword id="KW-0808">Transferase</keyword>
<keyword id="KW-0862">Zinc</keyword>
<accession>Q1C1U2</accession>
<reference key="1">
    <citation type="journal article" date="2006" name="J. Bacteriol.">
        <title>Complete genome sequence of Yersinia pestis strains Antiqua and Nepal516: evidence of gene reduction in an emerging pathogen.</title>
        <authorList>
            <person name="Chain P.S.G."/>
            <person name="Hu P."/>
            <person name="Malfatti S.A."/>
            <person name="Radnedge L."/>
            <person name="Larimer F."/>
            <person name="Vergez L.M."/>
            <person name="Worsham P."/>
            <person name="Chu M.C."/>
            <person name="Andersen G.L."/>
        </authorList>
    </citation>
    <scope>NUCLEOTIDE SEQUENCE [LARGE SCALE GENOMIC DNA]</scope>
    <source>
        <strain>Antiqua</strain>
    </source>
</reference>
<dbReference type="EC" id="2.7.7.6" evidence="1"/>
<dbReference type="EMBL" id="CP000308">
    <property type="protein sequence ID" value="ABG15580.1"/>
    <property type="status" value="ALT_INIT"/>
    <property type="molecule type" value="Genomic_DNA"/>
</dbReference>
<dbReference type="RefSeq" id="WP_002210677.1">
    <property type="nucleotide sequence ID" value="NZ_CP009906.1"/>
</dbReference>
<dbReference type="SMR" id="Q1C1U2"/>
<dbReference type="GeneID" id="96663777"/>
<dbReference type="KEGG" id="ypa:YPA_3618"/>
<dbReference type="Proteomes" id="UP000001971">
    <property type="component" value="Chromosome"/>
</dbReference>
<dbReference type="GO" id="GO:0000428">
    <property type="term" value="C:DNA-directed RNA polymerase complex"/>
    <property type="evidence" value="ECO:0007669"/>
    <property type="project" value="UniProtKB-KW"/>
</dbReference>
<dbReference type="GO" id="GO:0003677">
    <property type="term" value="F:DNA binding"/>
    <property type="evidence" value="ECO:0007669"/>
    <property type="project" value="UniProtKB-UniRule"/>
</dbReference>
<dbReference type="GO" id="GO:0003899">
    <property type="term" value="F:DNA-directed RNA polymerase activity"/>
    <property type="evidence" value="ECO:0007669"/>
    <property type="project" value="UniProtKB-UniRule"/>
</dbReference>
<dbReference type="GO" id="GO:0000287">
    <property type="term" value="F:magnesium ion binding"/>
    <property type="evidence" value="ECO:0007669"/>
    <property type="project" value="UniProtKB-UniRule"/>
</dbReference>
<dbReference type="GO" id="GO:0008270">
    <property type="term" value="F:zinc ion binding"/>
    <property type="evidence" value="ECO:0007669"/>
    <property type="project" value="UniProtKB-UniRule"/>
</dbReference>
<dbReference type="GO" id="GO:0006351">
    <property type="term" value="P:DNA-templated transcription"/>
    <property type="evidence" value="ECO:0007669"/>
    <property type="project" value="UniProtKB-UniRule"/>
</dbReference>
<dbReference type="CDD" id="cd02655">
    <property type="entry name" value="RNAP_beta'_C"/>
    <property type="match status" value="1"/>
</dbReference>
<dbReference type="CDD" id="cd01609">
    <property type="entry name" value="RNAP_beta'_N"/>
    <property type="match status" value="1"/>
</dbReference>
<dbReference type="FunFam" id="1.10.132.30:FF:000003">
    <property type="entry name" value="DNA-directed RNA polymerase subunit beta"/>
    <property type="match status" value="1"/>
</dbReference>
<dbReference type="FunFam" id="1.10.150.390:FF:000002">
    <property type="entry name" value="DNA-directed RNA polymerase subunit beta"/>
    <property type="match status" value="1"/>
</dbReference>
<dbReference type="FunFam" id="1.10.274.100:FF:000002">
    <property type="entry name" value="DNA-directed RNA polymerase subunit beta"/>
    <property type="match status" value="1"/>
</dbReference>
<dbReference type="FunFam" id="1.10.40.90:FF:000001">
    <property type="entry name" value="DNA-directed RNA polymerase subunit beta"/>
    <property type="match status" value="1"/>
</dbReference>
<dbReference type="FunFam" id="2.40.50.100:FF:000012">
    <property type="entry name" value="DNA-directed RNA polymerase subunit beta"/>
    <property type="match status" value="1"/>
</dbReference>
<dbReference type="FunFam" id="2.40.50.100:FF:000016">
    <property type="entry name" value="DNA-directed RNA polymerase subunit beta"/>
    <property type="match status" value="1"/>
</dbReference>
<dbReference type="FunFam" id="2.40.50.100:FF:000019">
    <property type="entry name" value="DNA-directed RNA polymerase subunit beta"/>
    <property type="match status" value="1"/>
</dbReference>
<dbReference type="FunFam" id="4.10.860.120:FF:000001">
    <property type="entry name" value="DNA-directed RNA polymerase subunit beta"/>
    <property type="match status" value="1"/>
</dbReference>
<dbReference type="Gene3D" id="1.10.132.30">
    <property type="match status" value="1"/>
</dbReference>
<dbReference type="Gene3D" id="1.10.150.390">
    <property type="match status" value="1"/>
</dbReference>
<dbReference type="Gene3D" id="1.10.1790.20">
    <property type="match status" value="1"/>
</dbReference>
<dbReference type="Gene3D" id="1.10.40.90">
    <property type="match status" value="1"/>
</dbReference>
<dbReference type="Gene3D" id="2.40.40.20">
    <property type="match status" value="1"/>
</dbReference>
<dbReference type="Gene3D" id="2.40.50.100">
    <property type="match status" value="3"/>
</dbReference>
<dbReference type="Gene3D" id="4.10.860.120">
    <property type="entry name" value="RNA polymerase II, clamp domain"/>
    <property type="match status" value="1"/>
</dbReference>
<dbReference type="Gene3D" id="1.10.274.100">
    <property type="entry name" value="RNA polymerase Rpb1, domain 3"/>
    <property type="match status" value="1"/>
</dbReference>
<dbReference type="HAMAP" id="MF_01322">
    <property type="entry name" value="RNApol_bact_RpoC"/>
    <property type="match status" value="1"/>
</dbReference>
<dbReference type="InterPro" id="IPR045867">
    <property type="entry name" value="DNA-dir_RpoC_beta_prime"/>
</dbReference>
<dbReference type="InterPro" id="IPR012754">
    <property type="entry name" value="DNA-dir_RpoC_beta_prime_bact"/>
</dbReference>
<dbReference type="InterPro" id="IPR000722">
    <property type="entry name" value="RNA_pol_asu"/>
</dbReference>
<dbReference type="InterPro" id="IPR006592">
    <property type="entry name" value="RNA_pol_N"/>
</dbReference>
<dbReference type="InterPro" id="IPR007080">
    <property type="entry name" value="RNA_pol_Rpb1_1"/>
</dbReference>
<dbReference type="InterPro" id="IPR007066">
    <property type="entry name" value="RNA_pol_Rpb1_3"/>
</dbReference>
<dbReference type="InterPro" id="IPR042102">
    <property type="entry name" value="RNA_pol_Rpb1_3_sf"/>
</dbReference>
<dbReference type="InterPro" id="IPR007083">
    <property type="entry name" value="RNA_pol_Rpb1_4"/>
</dbReference>
<dbReference type="InterPro" id="IPR007081">
    <property type="entry name" value="RNA_pol_Rpb1_5"/>
</dbReference>
<dbReference type="InterPro" id="IPR044893">
    <property type="entry name" value="RNA_pol_Rpb1_clamp_domain"/>
</dbReference>
<dbReference type="InterPro" id="IPR038120">
    <property type="entry name" value="Rpb1_funnel_sf"/>
</dbReference>
<dbReference type="NCBIfam" id="TIGR02386">
    <property type="entry name" value="rpoC_TIGR"/>
    <property type="match status" value="1"/>
</dbReference>
<dbReference type="PANTHER" id="PTHR19376">
    <property type="entry name" value="DNA-DIRECTED RNA POLYMERASE"/>
    <property type="match status" value="1"/>
</dbReference>
<dbReference type="PANTHER" id="PTHR19376:SF54">
    <property type="entry name" value="DNA-DIRECTED RNA POLYMERASE SUBUNIT BETA"/>
    <property type="match status" value="1"/>
</dbReference>
<dbReference type="Pfam" id="PF04997">
    <property type="entry name" value="RNA_pol_Rpb1_1"/>
    <property type="match status" value="1"/>
</dbReference>
<dbReference type="Pfam" id="PF00623">
    <property type="entry name" value="RNA_pol_Rpb1_2"/>
    <property type="match status" value="2"/>
</dbReference>
<dbReference type="Pfam" id="PF04983">
    <property type="entry name" value="RNA_pol_Rpb1_3"/>
    <property type="match status" value="1"/>
</dbReference>
<dbReference type="Pfam" id="PF05000">
    <property type="entry name" value="RNA_pol_Rpb1_4"/>
    <property type="match status" value="1"/>
</dbReference>
<dbReference type="Pfam" id="PF04998">
    <property type="entry name" value="RNA_pol_Rpb1_5"/>
    <property type="match status" value="1"/>
</dbReference>
<dbReference type="SMART" id="SM00663">
    <property type="entry name" value="RPOLA_N"/>
    <property type="match status" value="1"/>
</dbReference>
<dbReference type="SUPFAM" id="SSF64484">
    <property type="entry name" value="beta and beta-prime subunits of DNA dependent RNA-polymerase"/>
    <property type="match status" value="1"/>
</dbReference>
<gene>
    <name evidence="1" type="primary">rpoC</name>
    <name type="ordered locus">YPA_3618</name>
</gene>